<keyword id="KW-0963">Cytoplasm</keyword>
<keyword id="KW-0378">Hydrolase</keyword>
<proteinExistence type="inferred from homology"/>
<reference key="1">
    <citation type="journal article" date="2003" name="Nature">
        <title>Genome divergence in two Prochlorococcus ecotypes reflects oceanic niche differentiation.</title>
        <authorList>
            <person name="Rocap G."/>
            <person name="Larimer F.W."/>
            <person name="Lamerdin J.E."/>
            <person name="Malfatti S."/>
            <person name="Chain P."/>
            <person name="Ahlgren N.A."/>
            <person name="Arellano A."/>
            <person name="Coleman M."/>
            <person name="Hauser L."/>
            <person name="Hess W.R."/>
            <person name="Johnson Z.I."/>
            <person name="Land M.L."/>
            <person name="Lindell D."/>
            <person name="Post A.F."/>
            <person name="Regala W."/>
            <person name="Shah M."/>
            <person name="Shaw S.L."/>
            <person name="Steglich C."/>
            <person name="Sullivan M.B."/>
            <person name="Ting C.S."/>
            <person name="Tolonen A."/>
            <person name="Webb E.A."/>
            <person name="Zinser E.R."/>
            <person name="Chisholm S.W."/>
        </authorList>
    </citation>
    <scope>NUCLEOTIDE SEQUENCE [LARGE SCALE GENOMIC DNA]</scope>
    <source>
        <strain>CCMP1986 / NIES-2087 / MED4</strain>
    </source>
</reference>
<feature type="chain" id="PRO_0000098025" description="Urease subunit gamma">
    <location>
        <begin position="1"/>
        <end position="100"/>
    </location>
</feature>
<dbReference type="EC" id="3.5.1.5" evidence="1"/>
<dbReference type="EMBL" id="BX548174">
    <property type="protein sequence ID" value="CAE19424.1"/>
    <property type="molecule type" value="Genomic_DNA"/>
</dbReference>
<dbReference type="RefSeq" id="WP_011132598.1">
    <property type="nucleotide sequence ID" value="NC_005072.1"/>
</dbReference>
<dbReference type="SMR" id="Q7V1B4"/>
<dbReference type="STRING" id="59919.PMM0965"/>
<dbReference type="KEGG" id="pmm:PMM0965"/>
<dbReference type="eggNOG" id="COG0831">
    <property type="taxonomic scope" value="Bacteria"/>
</dbReference>
<dbReference type="HOGENOM" id="CLU_145825_1_0_3"/>
<dbReference type="OrthoDB" id="9793527at2"/>
<dbReference type="UniPathway" id="UPA00258">
    <property type="reaction ID" value="UER00370"/>
</dbReference>
<dbReference type="Proteomes" id="UP000001026">
    <property type="component" value="Chromosome"/>
</dbReference>
<dbReference type="GO" id="GO:0005737">
    <property type="term" value="C:cytoplasm"/>
    <property type="evidence" value="ECO:0007669"/>
    <property type="project" value="UniProtKB-SubCell"/>
</dbReference>
<dbReference type="GO" id="GO:0016151">
    <property type="term" value="F:nickel cation binding"/>
    <property type="evidence" value="ECO:0007669"/>
    <property type="project" value="InterPro"/>
</dbReference>
<dbReference type="GO" id="GO:0009039">
    <property type="term" value="F:urease activity"/>
    <property type="evidence" value="ECO:0007669"/>
    <property type="project" value="UniProtKB-UniRule"/>
</dbReference>
<dbReference type="GO" id="GO:0043419">
    <property type="term" value="P:urea catabolic process"/>
    <property type="evidence" value="ECO:0007669"/>
    <property type="project" value="UniProtKB-UniRule"/>
</dbReference>
<dbReference type="CDD" id="cd00390">
    <property type="entry name" value="Urease_gamma"/>
    <property type="match status" value="1"/>
</dbReference>
<dbReference type="Gene3D" id="3.30.280.10">
    <property type="entry name" value="Urease, gamma-like subunit"/>
    <property type="match status" value="1"/>
</dbReference>
<dbReference type="HAMAP" id="MF_00739">
    <property type="entry name" value="Urease_gamma"/>
    <property type="match status" value="1"/>
</dbReference>
<dbReference type="InterPro" id="IPR012010">
    <property type="entry name" value="Urease_gamma"/>
</dbReference>
<dbReference type="InterPro" id="IPR002026">
    <property type="entry name" value="Urease_gamma/gamma-beta_su"/>
</dbReference>
<dbReference type="InterPro" id="IPR036463">
    <property type="entry name" value="Urease_gamma_sf"/>
</dbReference>
<dbReference type="InterPro" id="IPR050069">
    <property type="entry name" value="Urease_subunit"/>
</dbReference>
<dbReference type="NCBIfam" id="NF009712">
    <property type="entry name" value="PRK13241.1"/>
    <property type="match status" value="1"/>
</dbReference>
<dbReference type="NCBIfam" id="TIGR00193">
    <property type="entry name" value="urease_gam"/>
    <property type="match status" value="1"/>
</dbReference>
<dbReference type="PANTHER" id="PTHR33569">
    <property type="entry name" value="UREASE"/>
    <property type="match status" value="1"/>
</dbReference>
<dbReference type="PANTHER" id="PTHR33569:SF1">
    <property type="entry name" value="UREASE"/>
    <property type="match status" value="1"/>
</dbReference>
<dbReference type="Pfam" id="PF00547">
    <property type="entry name" value="Urease_gamma"/>
    <property type="match status" value="1"/>
</dbReference>
<dbReference type="PIRSF" id="PIRSF001223">
    <property type="entry name" value="Urease_gamma"/>
    <property type="match status" value="1"/>
</dbReference>
<dbReference type="SUPFAM" id="SSF54111">
    <property type="entry name" value="Urease, gamma-subunit"/>
    <property type="match status" value="1"/>
</dbReference>
<name>URE3_PROMP</name>
<protein>
    <recommendedName>
        <fullName evidence="1">Urease subunit gamma</fullName>
        <ecNumber evidence="1">3.5.1.5</ecNumber>
    </recommendedName>
    <alternativeName>
        <fullName evidence="1">Urea amidohydrolase subunit gamma</fullName>
    </alternativeName>
</protein>
<accession>Q7V1B4</accession>
<organism>
    <name type="scientific">Prochlorococcus marinus subsp. pastoris (strain CCMP1986 / NIES-2087 / MED4)</name>
    <dbReference type="NCBI Taxonomy" id="59919"/>
    <lineage>
        <taxon>Bacteria</taxon>
        <taxon>Bacillati</taxon>
        <taxon>Cyanobacteriota</taxon>
        <taxon>Cyanophyceae</taxon>
        <taxon>Synechococcales</taxon>
        <taxon>Prochlorococcaceae</taxon>
        <taxon>Prochlorococcus</taxon>
    </lineage>
</organism>
<evidence type="ECO:0000255" key="1">
    <source>
        <dbReference type="HAMAP-Rule" id="MF_00739"/>
    </source>
</evidence>
<gene>
    <name evidence="1" type="primary">ureA</name>
    <name type="ordered locus">PMM0965</name>
</gene>
<comment type="catalytic activity">
    <reaction evidence="1">
        <text>urea + 2 H2O + H(+) = hydrogencarbonate + 2 NH4(+)</text>
        <dbReference type="Rhea" id="RHEA:20557"/>
        <dbReference type="ChEBI" id="CHEBI:15377"/>
        <dbReference type="ChEBI" id="CHEBI:15378"/>
        <dbReference type="ChEBI" id="CHEBI:16199"/>
        <dbReference type="ChEBI" id="CHEBI:17544"/>
        <dbReference type="ChEBI" id="CHEBI:28938"/>
        <dbReference type="EC" id="3.5.1.5"/>
    </reaction>
</comment>
<comment type="pathway">
    <text evidence="1">Nitrogen metabolism; urea degradation; CO(2) and NH(3) from urea (urease route): step 1/1.</text>
</comment>
<comment type="subunit">
    <text evidence="1">Heterotrimer of UreA (gamma), UreB (beta) and UreC (alpha) subunits. Three heterotrimers associate to form the active enzyme.</text>
</comment>
<comment type="subcellular location">
    <subcellularLocation>
        <location evidence="1">Cytoplasm</location>
    </subcellularLocation>
</comment>
<comment type="similarity">
    <text evidence="1">Belongs to the urease gamma subunit family.</text>
</comment>
<sequence length="100" mass="11173">MHLSPQEKDKLLIFSAAQLAERRLNRGLKLNYPETVAFLSFQVLEGARDGKSVSQLMSEGTTWLSKKQVMDGISEMVDEVQVEAVFPDGTKLVTIHNPIN</sequence>